<feature type="chain" id="PRO_1000079233" description="Chaperone protein DnaK">
    <location>
        <begin position="1"/>
        <end position="622"/>
    </location>
</feature>
<feature type="region of interest" description="Disordered" evidence="2">
    <location>
        <begin position="494"/>
        <end position="513"/>
    </location>
</feature>
<feature type="region of interest" description="Disordered" evidence="2">
    <location>
        <begin position="587"/>
        <end position="622"/>
    </location>
</feature>
<feature type="compositionally biased region" description="Basic and acidic residues" evidence="2">
    <location>
        <begin position="494"/>
        <end position="511"/>
    </location>
</feature>
<feature type="compositionally biased region" description="Acidic residues" evidence="2">
    <location>
        <begin position="608"/>
        <end position="622"/>
    </location>
</feature>
<feature type="modified residue" description="Phosphothreonine; by autocatalysis" evidence="1">
    <location>
        <position position="175"/>
    </location>
</feature>
<reference key="1">
    <citation type="submission" date="2007-04" db="EMBL/GenBank/DDBJ databases">
        <title>Complete sequence of chromosome of Mycobacterium gilvum PYR-GCK.</title>
        <authorList>
            <consortium name="US DOE Joint Genome Institute"/>
            <person name="Copeland A."/>
            <person name="Lucas S."/>
            <person name="Lapidus A."/>
            <person name="Barry K."/>
            <person name="Detter J.C."/>
            <person name="Glavina del Rio T."/>
            <person name="Hammon N."/>
            <person name="Israni S."/>
            <person name="Dalin E."/>
            <person name="Tice H."/>
            <person name="Pitluck S."/>
            <person name="Chain P."/>
            <person name="Malfatti S."/>
            <person name="Shin M."/>
            <person name="Vergez L."/>
            <person name="Schmutz J."/>
            <person name="Larimer F."/>
            <person name="Land M."/>
            <person name="Hauser L."/>
            <person name="Kyrpides N."/>
            <person name="Mikhailova N."/>
            <person name="Miller C."/>
            <person name="Richardson P."/>
        </authorList>
    </citation>
    <scope>NUCLEOTIDE SEQUENCE [LARGE SCALE GENOMIC DNA]</scope>
    <source>
        <strain>PYR-GCK</strain>
    </source>
</reference>
<comment type="function">
    <text evidence="1">Acts as a chaperone.</text>
</comment>
<comment type="induction">
    <text evidence="1">By stress conditions e.g. heat shock.</text>
</comment>
<comment type="similarity">
    <text evidence="1">Belongs to the heat shock protein 70 family.</text>
</comment>
<protein>
    <recommendedName>
        <fullName evidence="1">Chaperone protein DnaK</fullName>
    </recommendedName>
    <alternativeName>
        <fullName evidence="1">HSP70</fullName>
    </alternativeName>
    <alternativeName>
        <fullName evidence="1">Heat shock 70 kDa protein</fullName>
    </alternativeName>
    <alternativeName>
        <fullName evidence="1">Heat shock protein 70</fullName>
    </alternativeName>
</protein>
<dbReference type="EMBL" id="CP000656">
    <property type="protein sequence ID" value="ABP42754.1"/>
    <property type="molecule type" value="Genomic_DNA"/>
</dbReference>
<dbReference type="SMR" id="A4T112"/>
<dbReference type="STRING" id="350054.Mflv_0260"/>
<dbReference type="KEGG" id="mgi:Mflv_0260"/>
<dbReference type="eggNOG" id="COG0443">
    <property type="taxonomic scope" value="Bacteria"/>
</dbReference>
<dbReference type="HOGENOM" id="CLU_005965_2_1_11"/>
<dbReference type="OrthoDB" id="9766019at2"/>
<dbReference type="GO" id="GO:0005524">
    <property type="term" value="F:ATP binding"/>
    <property type="evidence" value="ECO:0007669"/>
    <property type="project" value="UniProtKB-UniRule"/>
</dbReference>
<dbReference type="GO" id="GO:0140662">
    <property type="term" value="F:ATP-dependent protein folding chaperone"/>
    <property type="evidence" value="ECO:0007669"/>
    <property type="project" value="InterPro"/>
</dbReference>
<dbReference type="GO" id="GO:0051082">
    <property type="term" value="F:unfolded protein binding"/>
    <property type="evidence" value="ECO:0007669"/>
    <property type="project" value="InterPro"/>
</dbReference>
<dbReference type="CDD" id="cd10234">
    <property type="entry name" value="ASKHA_NBD_HSP70_DnaK-like"/>
    <property type="match status" value="1"/>
</dbReference>
<dbReference type="FunFam" id="2.60.34.10:FF:000014">
    <property type="entry name" value="Chaperone protein DnaK HSP70"/>
    <property type="match status" value="1"/>
</dbReference>
<dbReference type="FunFam" id="1.20.1270.10:FF:000001">
    <property type="entry name" value="Molecular chaperone DnaK"/>
    <property type="match status" value="1"/>
</dbReference>
<dbReference type="FunFam" id="3.30.420.40:FF:000071">
    <property type="entry name" value="Molecular chaperone DnaK"/>
    <property type="match status" value="1"/>
</dbReference>
<dbReference type="FunFam" id="3.90.640.10:FF:000003">
    <property type="entry name" value="Molecular chaperone DnaK"/>
    <property type="match status" value="1"/>
</dbReference>
<dbReference type="Gene3D" id="1.20.1270.10">
    <property type="match status" value="1"/>
</dbReference>
<dbReference type="Gene3D" id="3.30.420.40">
    <property type="match status" value="3"/>
</dbReference>
<dbReference type="Gene3D" id="3.90.640.10">
    <property type="entry name" value="Actin, Chain A, domain 4"/>
    <property type="match status" value="1"/>
</dbReference>
<dbReference type="Gene3D" id="2.60.34.10">
    <property type="entry name" value="Substrate Binding Domain Of DNAk, Chain A, domain 1"/>
    <property type="match status" value="1"/>
</dbReference>
<dbReference type="HAMAP" id="MF_00332">
    <property type="entry name" value="DnaK"/>
    <property type="match status" value="1"/>
</dbReference>
<dbReference type="InterPro" id="IPR043129">
    <property type="entry name" value="ATPase_NBD"/>
</dbReference>
<dbReference type="InterPro" id="IPR012725">
    <property type="entry name" value="Chaperone_DnaK"/>
</dbReference>
<dbReference type="InterPro" id="IPR018181">
    <property type="entry name" value="Heat_shock_70_CS"/>
</dbReference>
<dbReference type="InterPro" id="IPR029048">
    <property type="entry name" value="HSP70_C_sf"/>
</dbReference>
<dbReference type="InterPro" id="IPR029047">
    <property type="entry name" value="HSP70_peptide-bd_sf"/>
</dbReference>
<dbReference type="InterPro" id="IPR013126">
    <property type="entry name" value="Hsp_70_fam"/>
</dbReference>
<dbReference type="NCBIfam" id="NF001413">
    <property type="entry name" value="PRK00290.1"/>
    <property type="match status" value="1"/>
</dbReference>
<dbReference type="NCBIfam" id="TIGR02350">
    <property type="entry name" value="prok_dnaK"/>
    <property type="match status" value="1"/>
</dbReference>
<dbReference type="PANTHER" id="PTHR19375">
    <property type="entry name" value="HEAT SHOCK PROTEIN 70KDA"/>
    <property type="match status" value="1"/>
</dbReference>
<dbReference type="Pfam" id="PF00012">
    <property type="entry name" value="HSP70"/>
    <property type="match status" value="1"/>
</dbReference>
<dbReference type="PRINTS" id="PR00301">
    <property type="entry name" value="HEATSHOCK70"/>
</dbReference>
<dbReference type="SUPFAM" id="SSF53067">
    <property type="entry name" value="Actin-like ATPase domain"/>
    <property type="match status" value="2"/>
</dbReference>
<dbReference type="SUPFAM" id="SSF100934">
    <property type="entry name" value="Heat shock protein 70kD (HSP70), C-terminal subdomain"/>
    <property type="match status" value="1"/>
</dbReference>
<dbReference type="SUPFAM" id="SSF100920">
    <property type="entry name" value="Heat shock protein 70kD (HSP70), peptide-binding domain"/>
    <property type="match status" value="1"/>
</dbReference>
<dbReference type="PROSITE" id="PS00297">
    <property type="entry name" value="HSP70_1"/>
    <property type="match status" value="1"/>
</dbReference>
<dbReference type="PROSITE" id="PS00329">
    <property type="entry name" value="HSP70_2"/>
    <property type="match status" value="1"/>
</dbReference>
<dbReference type="PROSITE" id="PS01036">
    <property type="entry name" value="HSP70_3"/>
    <property type="match status" value="1"/>
</dbReference>
<keyword id="KW-0067">ATP-binding</keyword>
<keyword id="KW-0143">Chaperone</keyword>
<keyword id="KW-0547">Nucleotide-binding</keyword>
<keyword id="KW-0597">Phosphoprotein</keyword>
<keyword id="KW-0346">Stress response</keyword>
<evidence type="ECO:0000255" key="1">
    <source>
        <dbReference type="HAMAP-Rule" id="MF_00332"/>
    </source>
</evidence>
<evidence type="ECO:0000256" key="2">
    <source>
        <dbReference type="SAM" id="MobiDB-lite"/>
    </source>
</evidence>
<name>DNAK_MYCGI</name>
<gene>
    <name evidence="1" type="primary">dnaK</name>
    <name type="ordered locus">Mflv_0260</name>
</gene>
<accession>A4T112</accession>
<organism>
    <name type="scientific">Mycolicibacterium gilvum (strain PYR-GCK)</name>
    <name type="common">Mycobacterium gilvum (strain PYR-GCK)</name>
    <dbReference type="NCBI Taxonomy" id="350054"/>
    <lineage>
        <taxon>Bacteria</taxon>
        <taxon>Bacillati</taxon>
        <taxon>Actinomycetota</taxon>
        <taxon>Actinomycetes</taxon>
        <taxon>Mycobacteriales</taxon>
        <taxon>Mycobacteriaceae</taxon>
        <taxon>Mycolicibacterium</taxon>
    </lineage>
</organism>
<proteinExistence type="inferred from homology"/>
<sequence length="622" mass="66605">MARAVGIDLGTTNSVVAVLEGGDPVVVANSEGSRTTPSVVAFARNGEVLVGQPAKNQAVTNVDRTIRSVKREIGTDWSVEIDGKNYTPQEISARVLMKLKRDAESYLGEDITDAVITVPAYFNDAQRQATKDAGQIAGLNVLRIVNEPTAAALAYGLDKGEKEQTILVFDLGGGTFDVSLLEIGEGVVEVRATSGDNHLGGDDWDDRIVEWLVDKFKGTSGIDLTKDKMAMQRLREAAEKAKIELSSSQSTSINLPYITVDADKNPLFLDEQLTRSEFQKITQDLLDRTRKPFQSVIKDAGISVGEIDHVVLVGGSTRMPAVSELVKEMTGGKEPNKGVNPDEVVAVGAALQAGVLKGEVKDVLLLDVTPLSLGIETKGGVMTKLIERNTTIPTKRSETFTTADDNQPSVQIQVFQGEREIASHNKLLGSFELTGIPPAPRGVPQIEVTFDIDANGIVHVTAKDKGTGKENTIKIQEGSGLSKEEIDRMIKDAEAHADEDRKRREEADVRNQAESLVYQTEKFVKEQREAEGGSKVPEDTLTKVDAAISDAKAALAGTDIAAIKSAMEKLGEESQALGQAIYEATQAEQAAGGAPGGESTGASNSGDDVVDAEVVEDDQERK</sequence>